<comment type="function">
    <text evidence="1">Component of the origin recognition complex (ORC) that binds origins of replication. DNA-binding is ATP-dependent, however specific DNA sequences that define origins of replication have not been identified so far. ORC is required to assemble the pre-replication complex necessary to initiate DNA replication (By similarity).</text>
</comment>
<comment type="subunit">
    <text evidence="1">ORC is composed of six subunits.</text>
</comment>
<comment type="subcellular location">
    <subcellularLocation>
        <location evidence="1">Nucleus</location>
    </subcellularLocation>
</comment>
<comment type="similarity">
    <text evidence="3">Belongs to the ORC3 family.</text>
</comment>
<sequence>MAGENYCSVCEGIISTENDLAVCYKCKEEIFHKACGKKVFDSLRCLNCGPIEKRSLSHQIGEISKGKAKLETRTSRFTGINVTKEFIESGEYGISKGDDDDDGDYVGGDDSSSDDEYFGNPTVLNNYPTTMNNVDLNFPTFFLLNEDMKKRKQKIKEDGNNEEIKKIEQEEKMIIQEYQNEEILKFFGDRSCFKQTQLAYEAMVQCLKDLKESIERMFKVVSVKTLGDISSFISMSYPKKSLLDIRDIALELIGQSIDDSIHHIPTSILYTSSSSPEVAQLFQSVPSNVMMRIKSHQPFSSDISSHLCEPPTITLNPDCCNTFKSTVSTICHSLTKDYDVTKFPSPHFEDLSRWYSNYFSIPLIQEVIELFKQQQQQQQQQQQQQQQQQQQQQQQQQQQQQKDKLEEIMLVRTPVILVIEDFETWNSEVLSDLIHLLSAYRHRIPFVLSFSISTSADAIHKVLPYQVVSLLNLKSLHLRSQNEMFEQLVKHLFLKSQPYIISKKAYLYLYYNFKNSYMSLSTTISVLRHFIIDHFLENGLSYLTLDLSNFQIDLKDDDDDMDGCSTIKLEPENDSTDSTVNDEVGTGDNIDNDNVSTHGEEDTPDSLVKSDIECQTLSYSSDDERNDYDTSTDSDNCSNFHKKKPNSNNRIKSDLECNDNDKDNDDNDNDINENNNNINNNNNNNSNNDDNDKDSFGPKRIPNQRFVTLIQKLPSLNTDEIENSKISTNRKLNKLQSNLIIFKESRPIMLELYYTILSKFQKSKTLKYSELLKKISLNDRKSYETLRKTILTNPESKQSIETLLDLLKTSRHHFERIIKATNSLKLFQTPKSKKYQDLVKIENLILKCRTLSNNFKNLLLPPDEQSKSIKNEIKQQQQQQQQQQQQQQQQQHQQQQKIENEQKNWSIKKKREHQLRNIQKPTDSYFKIYSREFLDDIVSVIIEDYLYPPLVSVPLSEIFDFTQTVFITQSRFNFHTAEGINDNLIHSVRKLKCECCIDSLCGTMDDFSISFILLLRSGRYINYFDWLTSFCSIINGDNNPTPNLKARFIKSVDTFVSLELIKKTRKRKDHFEKIAFLTTS</sequence>
<organism>
    <name type="scientific">Dictyostelium discoideum</name>
    <name type="common">Social amoeba</name>
    <dbReference type="NCBI Taxonomy" id="44689"/>
    <lineage>
        <taxon>Eukaryota</taxon>
        <taxon>Amoebozoa</taxon>
        <taxon>Evosea</taxon>
        <taxon>Eumycetozoa</taxon>
        <taxon>Dictyostelia</taxon>
        <taxon>Dictyosteliales</taxon>
        <taxon>Dictyosteliaceae</taxon>
        <taxon>Dictyostelium</taxon>
    </lineage>
</organism>
<reference key="1">
    <citation type="journal article" date="2005" name="Nature">
        <title>The genome of the social amoeba Dictyostelium discoideum.</title>
        <authorList>
            <person name="Eichinger L."/>
            <person name="Pachebat J.A."/>
            <person name="Gloeckner G."/>
            <person name="Rajandream M.A."/>
            <person name="Sucgang R."/>
            <person name="Berriman M."/>
            <person name="Song J."/>
            <person name="Olsen R."/>
            <person name="Szafranski K."/>
            <person name="Xu Q."/>
            <person name="Tunggal B."/>
            <person name="Kummerfeld S."/>
            <person name="Madera M."/>
            <person name="Konfortov B.A."/>
            <person name="Rivero F."/>
            <person name="Bankier A.T."/>
            <person name="Lehmann R."/>
            <person name="Hamlin N."/>
            <person name="Davies R."/>
            <person name="Gaudet P."/>
            <person name="Fey P."/>
            <person name="Pilcher K."/>
            <person name="Chen G."/>
            <person name="Saunders D."/>
            <person name="Sodergren E.J."/>
            <person name="Davis P."/>
            <person name="Kerhornou A."/>
            <person name="Nie X."/>
            <person name="Hall N."/>
            <person name="Anjard C."/>
            <person name="Hemphill L."/>
            <person name="Bason N."/>
            <person name="Farbrother P."/>
            <person name="Desany B."/>
            <person name="Just E."/>
            <person name="Morio T."/>
            <person name="Rost R."/>
            <person name="Churcher C.M."/>
            <person name="Cooper J."/>
            <person name="Haydock S."/>
            <person name="van Driessche N."/>
            <person name="Cronin A."/>
            <person name="Goodhead I."/>
            <person name="Muzny D.M."/>
            <person name="Mourier T."/>
            <person name="Pain A."/>
            <person name="Lu M."/>
            <person name="Harper D."/>
            <person name="Lindsay R."/>
            <person name="Hauser H."/>
            <person name="James K.D."/>
            <person name="Quiles M."/>
            <person name="Madan Babu M."/>
            <person name="Saito T."/>
            <person name="Buchrieser C."/>
            <person name="Wardroper A."/>
            <person name="Felder M."/>
            <person name="Thangavelu M."/>
            <person name="Johnson D."/>
            <person name="Knights A."/>
            <person name="Loulseged H."/>
            <person name="Mungall K.L."/>
            <person name="Oliver K."/>
            <person name="Price C."/>
            <person name="Quail M.A."/>
            <person name="Urushihara H."/>
            <person name="Hernandez J."/>
            <person name="Rabbinowitsch E."/>
            <person name="Steffen D."/>
            <person name="Sanders M."/>
            <person name="Ma J."/>
            <person name="Kohara Y."/>
            <person name="Sharp S."/>
            <person name="Simmonds M.N."/>
            <person name="Spiegler S."/>
            <person name="Tivey A."/>
            <person name="Sugano S."/>
            <person name="White B."/>
            <person name="Walker D."/>
            <person name="Woodward J.R."/>
            <person name="Winckler T."/>
            <person name="Tanaka Y."/>
            <person name="Shaulsky G."/>
            <person name="Schleicher M."/>
            <person name="Weinstock G.M."/>
            <person name="Rosenthal A."/>
            <person name="Cox E.C."/>
            <person name="Chisholm R.L."/>
            <person name="Gibbs R.A."/>
            <person name="Loomis W.F."/>
            <person name="Platzer M."/>
            <person name="Kay R.R."/>
            <person name="Williams J.G."/>
            <person name="Dear P.H."/>
            <person name="Noegel A.A."/>
            <person name="Barrell B.G."/>
            <person name="Kuspa A."/>
        </authorList>
    </citation>
    <scope>NUCLEOTIDE SEQUENCE [LARGE SCALE GENOMIC DNA]</scope>
    <source>
        <strain>AX4</strain>
    </source>
</reference>
<dbReference type="EMBL" id="AAFI02000005">
    <property type="protein sequence ID" value="EAL72889.2"/>
    <property type="molecule type" value="Genomic_DNA"/>
</dbReference>
<dbReference type="RefSeq" id="XP_646765.2">
    <property type="nucleotide sequence ID" value="XM_641673.2"/>
</dbReference>
<dbReference type="FunCoup" id="Q55BR6">
    <property type="interactions" value="15"/>
</dbReference>
<dbReference type="STRING" id="44689.Q55BR6"/>
<dbReference type="PaxDb" id="44689-DDB0233773"/>
<dbReference type="EnsemblProtists" id="EAL72889">
    <property type="protein sequence ID" value="EAL72889"/>
    <property type="gene ID" value="DDB_G0271078"/>
</dbReference>
<dbReference type="GeneID" id="8617738"/>
<dbReference type="KEGG" id="ddi:DDB_G0271078"/>
<dbReference type="dictyBase" id="DDB_G0271078">
    <property type="gene designation" value="orcC"/>
</dbReference>
<dbReference type="VEuPathDB" id="AmoebaDB:DDB_G0271078"/>
<dbReference type="eggNOG" id="KOG2538">
    <property type="taxonomic scope" value="Eukaryota"/>
</dbReference>
<dbReference type="HOGENOM" id="CLU_286273_0_0_1"/>
<dbReference type="InParanoid" id="Q55BR6"/>
<dbReference type="OMA" id="CECCIDS"/>
<dbReference type="Reactome" id="R-DDI-68616">
    <property type="pathway name" value="Assembly of the ORC complex at the origin of replication"/>
</dbReference>
<dbReference type="Reactome" id="R-DDI-68689">
    <property type="pathway name" value="CDC6 association with the ORC:origin complex"/>
</dbReference>
<dbReference type="Reactome" id="R-DDI-68962">
    <property type="pathway name" value="Activation of the pre-replicative complex"/>
</dbReference>
<dbReference type="PRO" id="PR:Q55BR6"/>
<dbReference type="Proteomes" id="UP000002195">
    <property type="component" value="Chromosome 1"/>
</dbReference>
<dbReference type="GO" id="GO:0031261">
    <property type="term" value="C:DNA replication preinitiation complex"/>
    <property type="evidence" value="ECO:0000318"/>
    <property type="project" value="GO_Central"/>
</dbReference>
<dbReference type="GO" id="GO:0005664">
    <property type="term" value="C:nuclear origin of replication recognition complex"/>
    <property type="evidence" value="ECO:0000318"/>
    <property type="project" value="GO_Central"/>
</dbReference>
<dbReference type="GO" id="GO:0005656">
    <property type="term" value="C:nuclear pre-replicative complex"/>
    <property type="evidence" value="ECO:0000318"/>
    <property type="project" value="GO_Central"/>
</dbReference>
<dbReference type="GO" id="GO:0003688">
    <property type="term" value="F:DNA replication origin binding"/>
    <property type="evidence" value="ECO:0000318"/>
    <property type="project" value="GO_Central"/>
</dbReference>
<dbReference type="GO" id="GO:0006270">
    <property type="term" value="P:DNA replication initiation"/>
    <property type="evidence" value="ECO:0000318"/>
    <property type="project" value="GO_Central"/>
</dbReference>
<dbReference type="CDD" id="cd20704">
    <property type="entry name" value="Orc3"/>
    <property type="match status" value="1"/>
</dbReference>
<dbReference type="InterPro" id="IPR020795">
    <property type="entry name" value="ORC3"/>
</dbReference>
<dbReference type="InterPro" id="IPR045667">
    <property type="entry name" value="ORC3_N"/>
</dbReference>
<dbReference type="InterPro" id="IPR040855">
    <property type="entry name" value="ORC_WH_C"/>
</dbReference>
<dbReference type="PANTHER" id="PTHR12748">
    <property type="entry name" value="ORIGIN RECOGNITION COMPLEX SUBUNIT 3"/>
    <property type="match status" value="1"/>
</dbReference>
<dbReference type="PANTHER" id="PTHR12748:SF0">
    <property type="entry name" value="ORIGIN RECOGNITION COMPLEX SUBUNIT 3"/>
    <property type="match status" value="1"/>
</dbReference>
<dbReference type="Pfam" id="PF07034">
    <property type="entry name" value="ORC3_N"/>
    <property type="match status" value="1"/>
</dbReference>
<dbReference type="Pfam" id="PF18137">
    <property type="entry name" value="ORC_WH_C"/>
    <property type="match status" value="1"/>
</dbReference>
<proteinExistence type="inferred from homology"/>
<keyword id="KW-0235">DNA replication</keyword>
<keyword id="KW-0238">DNA-binding</keyword>
<keyword id="KW-0539">Nucleus</keyword>
<keyword id="KW-1185">Reference proteome</keyword>
<evidence type="ECO:0000250" key="1"/>
<evidence type="ECO:0000256" key="2">
    <source>
        <dbReference type="SAM" id="MobiDB-lite"/>
    </source>
</evidence>
<evidence type="ECO:0000305" key="3"/>
<accession>Q55BR6</accession>
<feature type="chain" id="PRO_0000329969" description="Origin recognition complex subunit 3">
    <location>
        <begin position="1"/>
        <end position="1080"/>
    </location>
</feature>
<feature type="region of interest" description="Disordered" evidence="2">
    <location>
        <begin position="92"/>
        <end position="112"/>
    </location>
</feature>
<feature type="region of interest" description="Disordered" evidence="2">
    <location>
        <begin position="566"/>
        <end position="701"/>
    </location>
</feature>
<feature type="region of interest" description="Disordered" evidence="2">
    <location>
        <begin position="869"/>
        <end position="902"/>
    </location>
</feature>
<feature type="compositionally biased region" description="Basic and acidic residues" evidence="2">
    <location>
        <begin position="651"/>
        <end position="661"/>
    </location>
</feature>
<feature type="compositionally biased region" description="Acidic residues" evidence="2">
    <location>
        <begin position="662"/>
        <end position="671"/>
    </location>
</feature>
<feature type="compositionally biased region" description="Low complexity" evidence="2">
    <location>
        <begin position="672"/>
        <end position="688"/>
    </location>
</feature>
<feature type="compositionally biased region" description="Low complexity" evidence="2">
    <location>
        <begin position="875"/>
        <end position="896"/>
    </location>
</feature>
<protein>
    <recommendedName>
        <fullName>Origin recognition complex subunit 3</fullName>
    </recommendedName>
    <alternativeName>
        <fullName>Origin replication complex subunit C</fullName>
    </alternativeName>
</protein>
<name>ORC3_DICDI</name>
<gene>
    <name type="primary">orcC</name>
    <name type="synonym">orc3</name>
    <name type="ORF">DDB_G0271078</name>
</gene>